<comment type="function">
    <text evidence="1">NDH-1 shuttles electrons from NADH, via FMN and iron-sulfur (Fe-S) centers, to quinones in the respiratory chain. The immediate electron acceptor for the enzyme in this species is believed to be ubiquinone. Couples the redox reaction to proton translocation (for every two electrons transferred, four hydrogen ions are translocated across the cytoplasmic membrane), and thus conserves the redox energy in a proton gradient. This subunit may bind ubiquinone.</text>
</comment>
<comment type="catalytic activity">
    <reaction evidence="1">
        <text>a quinone + NADH + 5 H(+)(in) = a quinol + NAD(+) + 4 H(+)(out)</text>
        <dbReference type="Rhea" id="RHEA:57888"/>
        <dbReference type="ChEBI" id="CHEBI:15378"/>
        <dbReference type="ChEBI" id="CHEBI:24646"/>
        <dbReference type="ChEBI" id="CHEBI:57540"/>
        <dbReference type="ChEBI" id="CHEBI:57945"/>
        <dbReference type="ChEBI" id="CHEBI:132124"/>
    </reaction>
</comment>
<comment type="subunit">
    <text evidence="1">NDH-1 is composed of 14 different subunits. Subunits NuoA, H, J, K, L, M, N constitute the membrane sector of the complex.</text>
</comment>
<comment type="subcellular location">
    <subcellularLocation>
        <location evidence="1">Cell inner membrane</location>
        <topology evidence="1">Multi-pass membrane protein</topology>
    </subcellularLocation>
</comment>
<comment type="similarity">
    <text evidence="1">Belongs to the complex I subunit 1 family.</text>
</comment>
<feature type="chain" id="PRO_0000244927" description="NADH-quinone oxidoreductase subunit H">
    <location>
        <begin position="1"/>
        <end position="347"/>
    </location>
</feature>
<feature type="transmembrane region" description="Helical" evidence="1">
    <location>
        <begin position="21"/>
        <end position="41"/>
    </location>
</feature>
<feature type="transmembrane region" description="Helical" evidence="1">
    <location>
        <begin position="87"/>
        <end position="107"/>
    </location>
</feature>
<feature type="transmembrane region" description="Helical" evidence="1">
    <location>
        <begin position="120"/>
        <end position="140"/>
    </location>
</feature>
<feature type="transmembrane region" description="Helical" evidence="1">
    <location>
        <begin position="160"/>
        <end position="180"/>
    </location>
</feature>
<feature type="transmembrane region" description="Helical" evidence="1">
    <location>
        <begin position="194"/>
        <end position="214"/>
    </location>
</feature>
<feature type="transmembrane region" description="Helical" evidence="1">
    <location>
        <begin position="259"/>
        <end position="279"/>
    </location>
</feature>
<feature type="transmembrane region" description="Helical" evidence="1">
    <location>
        <begin position="282"/>
        <end position="302"/>
    </location>
</feature>
<feature type="transmembrane region" description="Helical" evidence="1">
    <location>
        <begin position="324"/>
        <end position="344"/>
    </location>
</feature>
<sequence length="347" mass="38455">MTEFFMGLGLSYEWAWGISTIAGILLIALPLMLGVAMIIYADRKIWAAMALRRGPNVVGPLGLLQSFADGLKVFLQETIIPTAANKGLFLIAPIITFTVALMAWAVIPFNSGAVLANINVGLLYVLAISSLGVYGVVIAGWSSNSKYPFFSAMRASAQMISYEVSIGFILICVVLWAGTFNLNDIVKAQQSHVWIINGFVANPLLFPMWVMFLISGMAETARAPFDLTEAESELVAGYQTEYSSMAFALYWLGEYANVLLMCALNAVLFWGGYLPPLDIPVLYLVPGFVWLLLKILFFFFIFSWVKATVPRYRYDQLMRLGWKVFLPVSLLFVFLVSGYLMATGHFA</sequence>
<proteinExistence type="inferred from homology"/>
<dbReference type="EC" id="7.1.1.-" evidence="1"/>
<dbReference type="EMBL" id="CP000248">
    <property type="protein sequence ID" value="ABD26730.1"/>
    <property type="molecule type" value="Genomic_DNA"/>
</dbReference>
<dbReference type="RefSeq" id="WP_011445936.1">
    <property type="nucleotide sequence ID" value="NC_007794.1"/>
</dbReference>
<dbReference type="SMR" id="Q2G5Z3"/>
<dbReference type="STRING" id="279238.Saro_2293"/>
<dbReference type="KEGG" id="nar:Saro_2293"/>
<dbReference type="eggNOG" id="COG1005">
    <property type="taxonomic scope" value="Bacteria"/>
</dbReference>
<dbReference type="HOGENOM" id="CLU_015134_0_1_5"/>
<dbReference type="Proteomes" id="UP000009134">
    <property type="component" value="Chromosome"/>
</dbReference>
<dbReference type="GO" id="GO:0005886">
    <property type="term" value="C:plasma membrane"/>
    <property type="evidence" value="ECO:0007669"/>
    <property type="project" value="UniProtKB-SubCell"/>
</dbReference>
<dbReference type="GO" id="GO:0003954">
    <property type="term" value="F:NADH dehydrogenase activity"/>
    <property type="evidence" value="ECO:0007669"/>
    <property type="project" value="TreeGrafter"/>
</dbReference>
<dbReference type="GO" id="GO:0016655">
    <property type="term" value="F:oxidoreductase activity, acting on NAD(P)H, quinone or similar compound as acceptor"/>
    <property type="evidence" value="ECO:0007669"/>
    <property type="project" value="UniProtKB-UniRule"/>
</dbReference>
<dbReference type="GO" id="GO:0048038">
    <property type="term" value="F:quinone binding"/>
    <property type="evidence" value="ECO:0007669"/>
    <property type="project" value="UniProtKB-KW"/>
</dbReference>
<dbReference type="GO" id="GO:0009060">
    <property type="term" value="P:aerobic respiration"/>
    <property type="evidence" value="ECO:0007669"/>
    <property type="project" value="TreeGrafter"/>
</dbReference>
<dbReference type="HAMAP" id="MF_01350">
    <property type="entry name" value="NDH1_NuoH"/>
    <property type="match status" value="1"/>
</dbReference>
<dbReference type="InterPro" id="IPR001694">
    <property type="entry name" value="NADH_UbQ_OxRdtase_su1/FPO"/>
</dbReference>
<dbReference type="InterPro" id="IPR018086">
    <property type="entry name" value="NADH_UbQ_OxRdtase_su1_CS"/>
</dbReference>
<dbReference type="NCBIfam" id="NF004741">
    <property type="entry name" value="PRK06076.1-2"/>
    <property type="match status" value="1"/>
</dbReference>
<dbReference type="NCBIfam" id="NF004745">
    <property type="entry name" value="PRK06076.1-6"/>
    <property type="match status" value="1"/>
</dbReference>
<dbReference type="PANTHER" id="PTHR11432">
    <property type="entry name" value="NADH DEHYDROGENASE SUBUNIT 1"/>
    <property type="match status" value="1"/>
</dbReference>
<dbReference type="PANTHER" id="PTHR11432:SF3">
    <property type="entry name" value="NADH-UBIQUINONE OXIDOREDUCTASE CHAIN 1"/>
    <property type="match status" value="1"/>
</dbReference>
<dbReference type="Pfam" id="PF00146">
    <property type="entry name" value="NADHdh"/>
    <property type="match status" value="1"/>
</dbReference>
<dbReference type="PROSITE" id="PS00668">
    <property type="entry name" value="COMPLEX1_ND1_2"/>
    <property type="match status" value="1"/>
</dbReference>
<evidence type="ECO:0000255" key="1">
    <source>
        <dbReference type="HAMAP-Rule" id="MF_01350"/>
    </source>
</evidence>
<organism>
    <name type="scientific">Novosphingobium aromaticivorans (strain ATCC 700278 / DSM 12444 / CCUG 56034 / CIP 105152 / NBRC 16084 / F199)</name>
    <dbReference type="NCBI Taxonomy" id="279238"/>
    <lineage>
        <taxon>Bacteria</taxon>
        <taxon>Pseudomonadati</taxon>
        <taxon>Pseudomonadota</taxon>
        <taxon>Alphaproteobacteria</taxon>
        <taxon>Sphingomonadales</taxon>
        <taxon>Sphingomonadaceae</taxon>
        <taxon>Novosphingobium</taxon>
    </lineage>
</organism>
<gene>
    <name evidence="1" type="primary">nuoH</name>
    <name type="ordered locus">Saro_2293</name>
</gene>
<protein>
    <recommendedName>
        <fullName evidence="1">NADH-quinone oxidoreductase subunit H</fullName>
        <ecNumber evidence="1">7.1.1.-</ecNumber>
    </recommendedName>
    <alternativeName>
        <fullName evidence="1">NADH dehydrogenase I subunit H</fullName>
    </alternativeName>
    <alternativeName>
        <fullName evidence="1">NDH-1 subunit H</fullName>
    </alternativeName>
</protein>
<name>NUOH_NOVAD</name>
<reference key="1">
    <citation type="submission" date="2006-01" db="EMBL/GenBank/DDBJ databases">
        <title>Complete sequence of Novosphingobium aromaticivorans DSM 12444.</title>
        <authorList>
            <consortium name="US DOE Joint Genome Institute"/>
            <person name="Copeland A."/>
            <person name="Lucas S."/>
            <person name="Lapidus A."/>
            <person name="Barry K."/>
            <person name="Detter J.C."/>
            <person name="Glavina T."/>
            <person name="Hammon N."/>
            <person name="Israni S."/>
            <person name="Pitluck S."/>
            <person name="Chain P."/>
            <person name="Malfatti S."/>
            <person name="Shin M."/>
            <person name="Vergez L."/>
            <person name="Schmutz J."/>
            <person name="Larimer F."/>
            <person name="Land M."/>
            <person name="Kyrpides N."/>
            <person name="Ivanova N."/>
            <person name="Fredrickson J."/>
            <person name="Balkwill D."/>
            <person name="Romine M.F."/>
            <person name="Richardson P."/>
        </authorList>
    </citation>
    <scope>NUCLEOTIDE SEQUENCE [LARGE SCALE GENOMIC DNA]</scope>
    <source>
        <strain>ATCC 700278 / DSM 12444 / CCUG 56034 / CIP 105152 / NBRC 16084 / F199</strain>
    </source>
</reference>
<accession>Q2G5Z3</accession>
<keyword id="KW-0997">Cell inner membrane</keyword>
<keyword id="KW-1003">Cell membrane</keyword>
<keyword id="KW-0472">Membrane</keyword>
<keyword id="KW-0520">NAD</keyword>
<keyword id="KW-0874">Quinone</keyword>
<keyword id="KW-1185">Reference proteome</keyword>
<keyword id="KW-1278">Translocase</keyword>
<keyword id="KW-0812">Transmembrane</keyword>
<keyword id="KW-1133">Transmembrane helix</keyword>
<keyword id="KW-0830">Ubiquinone</keyword>